<gene>
    <name evidence="2" type="primary">infB</name>
    <name type="ordered locus">Cag_1462</name>
</gene>
<organism>
    <name type="scientific">Chlorobium chlorochromatii (strain CaD3)</name>
    <dbReference type="NCBI Taxonomy" id="340177"/>
    <lineage>
        <taxon>Bacteria</taxon>
        <taxon>Pseudomonadati</taxon>
        <taxon>Chlorobiota</taxon>
        <taxon>Chlorobiia</taxon>
        <taxon>Chlorobiales</taxon>
        <taxon>Chlorobiaceae</taxon>
        <taxon>Chlorobium/Pelodictyon group</taxon>
        <taxon>Chlorobium</taxon>
    </lineage>
</organism>
<reference key="1">
    <citation type="submission" date="2005-08" db="EMBL/GenBank/DDBJ databases">
        <title>Complete sequence of Chlorobium chlorochromatii CaD3.</title>
        <authorList>
            <consortium name="US DOE Joint Genome Institute"/>
            <person name="Copeland A."/>
            <person name="Lucas S."/>
            <person name="Lapidus A."/>
            <person name="Barry K."/>
            <person name="Detter J.C."/>
            <person name="Glavina T."/>
            <person name="Hammon N."/>
            <person name="Israni S."/>
            <person name="Pitluck S."/>
            <person name="Bryant D."/>
            <person name="Schmutz J."/>
            <person name="Larimer F."/>
            <person name="Land M."/>
            <person name="Kyrpides N."/>
            <person name="Ivanova N."/>
            <person name="Richardson P."/>
        </authorList>
    </citation>
    <scope>NUCLEOTIDE SEQUENCE [LARGE SCALE GENOMIC DNA]</scope>
    <source>
        <strain>CaD3</strain>
    </source>
</reference>
<feature type="chain" id="PRO_0000228184" description="Translation initiation factor IF-2">
    <location>
        <begin position="1"/>
        <end position="1022"/>
    </location>
</feature>
<feature type="domain" description="tr-type G">
    <location>
        <begin position="519"/>
        <end position="689"/>
    </location>
</feature>
<feature type="region of interest" description="Disordered" evidence="3">
    <location>
        <begin position="82"/>
        <end position="129"/>
    </location>
</feature>
<feature type="region of interest" description="Disordered" evidence="3">
    <location>
        <begin position="342"/>
        <end position="436"/>
    </location>
</feature>
<feature type="region of interest" description="G1" evidence="1">
    <location>
        <begin position="528"/>
        <end position="535"/>
    </location>
</feature>
<feature type="region of interest" description="G2" evidence="1">
    <location>
        <begin position="553"/>
        <end position="557"/>
    </location>
</feature>
<feature type="region of interest" description="G3" evidence="1">
    <location>
        <begin position="575"/>
        <end position="578"/>
    </location>
</feature>
<feature type="region of interest" description="G4" evidence="1">
    <location>
        <begin position="629"/>
        <end position="632"/>
    </location>
</feature>
<feature type="region of interest" description="G5" evidence="1">
    <location>
        <begin position="665"/>
        <end position="667"/>
    </location>
</feature>
<feature type="compositionally biased region" description="Basic and acidic residues" evidence="3">
    <location>
        <begin position="82"/>
        <end position="94"/>
    </location>
</feature>
<feature type="compositionally biased region" description="Low complexity" evidence="3">
    <location>
        <begin position="104"/>
        <end position="115"/>
    </location>
</feature>
<feature type="compositionally biased region" description="Basic residues" evidence="3">
    <location>
        <begin position="375"/>
        <end position="384"/>
    </location>
</feature>
<feature type="compositionally biased region" description="Basic and acidic residues" evidence="3">
    <location>
        <begin position="421"/>
        <end position="436"/>
    </location>
</feature>
<feature type="binding site" evidence="2">
    <location>
        <begin position="528"/>
        <end position="535"/>
    </location>
    <ligand>
        <name>GTP</name>
        <dbReference type="ChEBI" id="CHEBI:37565"/>
    </ligand>
</feature>
<feature type="binding site" evidence="2">
    <location>
        <begin position="575"/>
        <end position="579"/>
    </location>
    <ligand>
        <name>GTP</name>
        <dbReference type="ChEBI" id="CHEBI:37565"/>
    </ligand>
</feature>
<feature type="binding site" evidence="2">
    <location>
        <begin position="629"/>
        <end position="632"/>
    </location>
    <ligand>
        <name>GTP</name>
        <dbReference type="ChEBI" id="CHEBI:37565"/>
    </ligand>
</feature>
<accession>Q3AQK7</accession>
<comment type="function">
    <text evidence="2">One of the essential components for the initiation of protein synthesis. Protects formylmethionyl-tRNA from spontaneous hydrolysis and promotes its binding to the 30S ribosomal subunits. Also involved in the hydrolysis of GTP during the formation of the 70S ribosomal complex.</text>
</comment>
<comment type="subcellular location">
    <subcellularLocation>
        <location evidence="2">Cytoplasm</location>
    </subcellularLocation>
</comment>
<comment type="similarity">
    <text evidence="2">Belongs to the TRAFAC class translation factor GTPase superfamily. Classic translation factor GTPase family. IF-2 subfamily.</text>
</comment>
<evidence type="ECO:0000250" key="1"/>
<evidence type="ECO:0000255" key="2">
    <source>
        <dbReference type="HAMAP-Rule" id="MF_00100"/>
    </source>
</evidence>
<evidence type="ECO:0000256" key="3">
    <source>
        <dbReference type="SAM" id="MobiDB-lite"/>
    </source>
</evidence>
<dbReference type="EMBL" id="CP000108">
    <property type="protein sequence ID" value="ABB28718.1"/>
    <property type="molecule type" value="Genomic_DNA"/>
</dbReference>
<dbReference type="SMR" id="Q3AQK7"/>
<dbReference type="STRING" id="340177.Cag_1462"/>
<dbReference type="KEGG" id="cch:Cag_1462"/>
<dbReference type="eggNOG" id="COG0532">
    <property type="taxonomic scope" value="Bacteria"/>
</dbReference>
<dbReference type="HOGENOM" id="CLU_006301_0_1_10"/>
<dbReference type="OrthoDB" id="9811804at2"/>
<dbReference type="GO" id="GO:0005737">
    <property type="term" value="C:cytoplasm"/>
    <property type="evidence" value="ECO:0007669"/>
    <property type="project" value="UniProtKB-SubCell"/>
</dbReference>
<dbReference type="GO" id="GO:0005525">
    <property type="term" value="F:GTP binding"/>
    <property type="evidence" value="ECO:0007669"/>
    <property type="project" value="UniProtKB-KW"/>
</dbReference>
<dbReference type="GO" id="GO:0003924">
    <property type="term" value="F:GTPase activity"/>
    <property type="evidence" value="ECO:0007669"/>
    <property type="project" value="UniProtKB-UniRule"/>
</dbReference>
<dbReference type="GO" id="GO:0003743">
    <property type="term" value="F:translation initiation factor activity"/>
    <property type="evidence" value="ECO:0007669"/>
    <property type="project" value="UniProtKB-UniRule"/>
</dbReference>
<dbReference type="CDD" id="cd01887">
    <property type="entry name" value="IF2_eIF5B"/>
    <property type="match status" value="1"/>
</dbReference>
<dbReference type="CDD" id="cd03702">
    <property type="entry name" value="IF2_mtIF2_II"/>
    <property type="match status" value="1"/>
</dbReference>
<dbReference type="CDD" id="cd03692">
    <property type="entry name" value="mtIF2_IVc"/>
    <property type="match status" value="1"/>
</dbReference>
<dbReference type="FunFam" id="2.40.30.10:FF:000008">
    <property type="entry name" value="Translation initiation factor IF-2"/>
    <property type="match status" value="1"/>
</dbReference>
<dbReference type="FunFam" id="2.40.30.10:FF:000054">
    <property type="entry name" value="Translation initiation factor IF-2"/>
    <property type="match status" value="1"/>
</dbReference>
<dbReference type="FunFam" id="3.40.50.10050:FF:000001">
    <property type="entry name" value="Translation initiation factor IF-2"/>
    <property type="match status" value="1"/>
</dbReference>
<dbReference type="FunFam" id="3.40.50.300:FF:000019">
    <property type="entry name" value="Translation initiation factor IF-2"/>
    <property type="match status" value="1"/>
</dbReference>
<dbReference type="Gene3D" id="1.10.10.2480">
    <property type="match status" value="1"/>
</dbReference>
<dbReference type="Gene3D" id="3.40.50.300">
    <property type="entry name" value="P-loop containing nucleotide triphosphate hydrolases"/>
    <property type="match status" value="1"/>
</dbReference>
<dbReference type="Gene3D" id="2.40.30.10">
    <property type="entry name" value="Translation factors"/>
    <property type="match status" value="2"/>
</dbReference>
<dbReference type="Gene3D" id="3.40.50.10050">
    <property type="entry name" value="Translation initiation factor IF- 2, domain 3"/>
    <property type="match status" value="1"/>
</dbReference>
<dbReference type="HAMAP" id="MF_00100_B">
    <property type="entry name" value="IF_2_B"/>
    <property type="match status" value="1"/>
</dbReference>
<dbReference type="InterPro" id="IPR053905">
    <property type="entry name" value="EF-G-like_DII"/>
</dbReference>
<dbReference type="InterPro" id="IPR044145">
    <property type="entry name" value="IF2_II"/>
</dbReference>
<dbReference type="InterPro" id="IPR006847">
    <property type="entry name" value="IF2_N"/>
</dbReference>
<dbReference type="InterPro" id="IPR027417">
    <property type="entry name" value="P-loop_NTPase"/>
</dbReference>
<dbReference type="InterPro" id="IPR005225">
    <property type="entry name" value="Small_GTP-bd"/>
</dbReference>
<dbReference type="InterPro" id="IPR000795">
    <property type="entry name" value="T_Tr_GTP-bd_dom"/>
</dbReference>
<dbReference type="InterPro" id="IPR000178">
    <property type="entry name" value="TF_IF2_bacterial-like"/>
</dbReference>
<dbReference type="InterPro" id="IPR015760">
    <property type="entry name" value="TIF_IF2"/>
</dbReference>
<dbReference type="InterPro" id="IPR023115">
    <property type="entry name" value="TIF_IF2_dom3"/>
</dbReference>
<dbReference type="InterPro" id="IPR036925">
    <property type="entry name" value="TIF_IF2_dom3_sf"/>
</dbReference>
<dbReference type="InterPro" id="IPR009000">
    <property type="entry name" value="Transl_B-barrel_sf"/>
</dbReference>
<dbReference type="NCBIfam" id="TIGR00487">
    <property type="entry name" value="IF-2"/>
    <property type="match status" value="1"/>
</dbReference>
<dbReference type="NCBIfam" id="TIGR00231">
    <property type="entry name" value="small_GTP"/>
    <property type="match status" value="1"/>
</dbReference>
<dbReference type="PANTHER" id="PTHR43381:SF5">
    <property type="entry name" value="TR-TYPE G DOMAIN-CONTAINING PROTEIN"/>
    <property type="match status" value="1"/>
</dbReference>
<dbReference type="PANTHER" id="PTHR43381">
    <property type="entry name" value="TRANSLATION INITIATION FACTOR IF-2-RELATED"/>
    <property type="match status" value="1"/>
</dbReference>
<dbReference type="Pfam" id="PF22042">
    <property type="entry name" value="EF-G_D2"/>
    <property type="match status" value="1"/>
</dbReference>
<dbReference type="Pfam" id="PF00009">
    <property type="entry name" value="GTP_EFTU"/>
    <property type="match status" value="1"/>
</dbReference>
<dbReference type="Pfam" id="PF11987">
    <property type="entry name" value="IF-2"/>
    <property type="match status" value="1"/>
</dbReference>
<dbReference type="Pfam" id="PF04760">
    <property type="entry name" value="IF2_N"/>
    <property type="match status" value="1"/>
</dbReference>
<dbReference type="SUPFAM" id="SSF52156">
    <property type="entry name" value="Initiation factor IF2/eIF5b, domain 3"/>
    <property type="match status" value="1"/>
</dbReference>
<dbReference type="SUPFAM" id="SSF52540">
    <property type="entry name" value="P-loop containing nucleoside triphosphate hydrolases"/>
    <property type="match status" value="1"/>
</dbReference>
<dbReference type="SUPFAM" id="SSF50447">
    <property type="entry name" value="Translation proteins"/>
    <property type="match status" value="2"/>
</dbReference>
<dbReference type="PROSITE" id="PS51722">
    <property type="entry name" value="G_TR_2"/>
    <property type="match status" value="1"/>
</dbReference>
<dbReference type="PROSITE" id="PS01176">
    <property type="entry name" value="IF2"/>
    <property type="match status" value="1"/>
</dbReference>
<name>IF2_CHLCH</name>
<protein>
    <recommendedName>
        <fullName evidence="2">Translation initiation factor IF-2</fullName>
    </recommendedName>
</protein>
<proteinExistence type="inferred from homology"/>
<sequence>MTLGESEKRYRISDIARELQLSPQEVLQFVKQQGVKVASTSSMVNEEVHGLIINQFSAEKKMVDETLKIRAEKEKRLTRLEEQSRKTLEKEQHLMEAISPTVRASKSSAKGSESAPKSEPKKSKQAVPAAAMVDDVPAAVVQQVVAEPEVVEPTPVVEVEAPALEPAIISEHVVDAEPIENAVTVAPVEVVVNEPIETVESVEPEFVVAEVTPLEPIAQSTIEIVAEGESVEVAEALHVAEPVVAIPPITETAELSDSTVEPIEPIASVPSTAPAPPARREPTVNENLVSFAAPQMMGGLTVVGTLDMHTGRGRKNRKKNFREQADALKGEFEVKAAAPVASENKTEAGVAKKSKPAAEVKPKPATTTAADDAKKAKKGKKKKKPDVDEKVISANIQKTISGIDDRSGTGSRQKFRKMRRSEREREQEEGAAQRELEQSIVRVTEFASPHELAELMGITAKDIIQKCFGLGKFVTINQRLDRESIELIALEFGFEAEFISEVEATAVETEADAEEDLQTRPPVVTIMGHVDHGKTSLLDYIRKSRVVAGESGGITQHIGAYEVTVDGDRKITFLDTPGHEAFTAMRARGAQVTDIVILVVAADDNVMPQTIEAINHAKAAGVPIVVALNKIDKSEANPDKIKTQLSEAGVLIEEWGGVYQCQEISAKKGIGIVELMEKVLTEAELRELKGNYSREVLASGVIVESELDKGKGVVSTVLVQRGVLKVGDPFVAGNSLGKVRALMDERGKRILLAFPSQPVRVLGFEDLPQSGDVLTVMASERDARDLAQKRQIIRREHDFRRSTRVKLDSIARQIREGVMKELNVIIKADTDGSIQALADGLMKIQNDEVKVQLIHQGVGQITETDVLLAAASDAIIIGFRVRPNVNAKKLAEKEDLDIRFYSVIYHVLEDVETALEGMLSPELHEESLGSIEIRQIFRVPKVGNVGGCYVLEGKVPRDAKVRLLRDGVQIYEGQLAALKRFKDDVKEVDSGYECGLSLKNYDDIKVGDVVEAYRIVEKKRKL</sequence>
<keyword id="KW-0963">Cytoplasm</keyword>
<keyword id="KW-0342">GTP-binding</keyword>
<keyword id="KW-0396">Initiation factor</keyword>
<keyword id="KW-0547">Nucleotide-binding</keyword>
<keyword id="KW-0648">Protein biosynthesis</keyword>